<proteinExistence type="evidence at protein level"/>
<comment type="function">
    <text evidence="3 4 5 6">Catalyzes the NADP(+)-dependent oxidative decarboxylation of isocitrate (D-threo-isocitrate) to 2-ketoglutarate (2-oxoglutarate), which is required by other enzymes such as the phytanoyl-CoA dioxygenase (PubMed:12031902, PubMed:29923039). Plays a critical role in the generation of NADPH, an important cofactor in many biosynthesis pathways (PubMed:12031902). May act as a corneal epithelial crystallin and may be involved in maintaining corneal epithelial transparency (By similarity).</text>
</comment>
<comment type="catalytic activity">
    <reaction evidence="4 5">
        <text>D-threo-isocitrate + NADP(+) = 2-oxoglutarate + CO2 + NADPH</text>
        <dbReference type="Rhea" id="RHEA:19629"/>
        <dbReference type="ChEBI" id="CHEBI:15562"/>
        <dbReference type="ChEBI" id="CHEBI:16526"/>
        <dbReference type="ChEBI" id="CHEBI:16810"/>
        <dbReference type="ChEBI" id="CHEBI:57783"/>
        <dbReference type="ChEBI" id="CHEBI:58349"/>
        <dbReference type="EC" id="1.1.1.42"/>
    </reaction>
    <physiologicalReaction direction="left-to-right" evidence="9 10">
        <dbReference type="Rhea" id="RHEA:19630"/>
    </physiologicalReaction>
</comment>
<comment type="cofactor">
    <cofactor evidence="5">
        <name>Mg(2+)</name>
        <dbReference type="ChEBI" id="CHEBI:18420"/>
    </cofactor>
    <cofactor evidence="5">
        <name>Mn(2+)</name>
        <dbReference type="ChEBI" id="CHEBI:29035"/>
    </cofactor>
    <text evidence="10">Binds 1 Mg(2+) or Mn(2+) ion per subunit.</text>
</comment>
<comment type="activity regulation">
    <text evidence="5">Irreversibly inhibited by Cd(2+) concentrations above 50 uM.</text>
</comment>
<comment type="subunit">
    <text evidence="5">Homodimer.</text>
</comment>
<comment type="subcellular location">
    <subcellularLocation>
        <location evidence="4">Cytoplasm</location>
        <location evidence="4">Cytosol</location>
    </subcellularLocation>
</comment>
<comment type="tissue specificity">
    <text evidence="4">Highly expressed in the liver followed by kidney, lower expression in spleen, brain and lung.</text>
</comment>
<comment type="PTM">
    <text evidence="1">Acetylation at Lys-374 dramatically reduces catalytic activity.</text>
</comment>
<comment type="similarity">
    <text evidence="8">Belongs to the isocitrate and isopropylmalate dehydrogenases family.</text>
</comment>
<gene>
    <name type="primary">Idh1</name>
</gene>
<sequence>MSRKIQGGSVVEMQGDEMTRIIWELIKEKLILPYVELDLHSYDLGIENRDATNDQVTKDAAEAIKKYNVGVKCATITPDEKRVEEFKLKQMWKSPNGTIRNILGGTVFREAIICKNIPRLVTGWVKPIIIGRHAYGDQYRATDFVVPGPGKVEITYTPKDGTQKVTYMVHDFEEGGGVAMGMYNQDKSIEDFAHSSFQMALSKGWPLYLSTKNTILKKYDGRFKDIFQEIYDKKYKSQFEAQKICYEHRLIDDMVAQAMKSEGGFIWACKNYDGDVQSDSVAQGYGSLGMMTSVLICPDGKTVEAEAAHGTVTRHYRMYQKGQETSTNPIASIFAWSRGLAHRAKLDNNTELSFFAKALEDVCIETIEAGFMTKDLAACIKGLPNVQRSDYLNTFEFMDKLGENLKAKLAQAKL</sequence>
<protein>
    <recommendedName>
        <fullName>Isocitrate dehydrogenase [NADP] cytoplasmic</fullName>
        <shortName evidence="7">IDH</shortName>
        <shortName>IDH1</shortName>
        <ecNumber evidence="4 5">1.1.1.42</ecNumber>
    </recommendedName>
    <alternativeName>
        <fullName>Cytosolic NADP-isocitrate dehydrogenase</fullName>
    </alternativeName>
    <alternativeName>
        <fullName>IDPc</fullName>
    </alternativeName>
    <alternativeName>
        <fullName>NADP(+)-specific ICDH</fullName>
    </alternativeName>
    <alternativeName>
        <fullName>Oxalosuccinate decarboxylase</fullName>
    </alternativeName>
</protein>
<name>IDHC_MOUSE</name>
<keyword id="KW-0002">3D-structure</keyword>
<keyword id="KW-0007">Acetylation</keyword>
<keyword id="KW-0963">Cytoplasm</keyword>
<keyword id="KW-0903">Direct protein sequencing</keyword>
<keyword id="KW-0329">Glyoxylate bypass</keyword>
<keyword id="KW-0460">Magnesium</keyword>
<keyword id="KW-0464">Manganese</keyword>
<keyword id="KW-0479">Metal-binding</keyword>
<keyword id="KW-0521">NADP</keyword>
<keyword id="KW-0560">Oxidoreductase</keyword>
<keyword id="KW-0597">Phosphoprotein</keyword>
<keyword id="KW-1185">Reference proteome</keyword>
<keyword id="KW-0816">Tricarboxylic acid cycle</keyword>
<accession>O88844</accession>
<accession>Q3UAV7</accession>
<feature type="initiator methionine" description="Removed" evidence="2">
    <location>
        <position position="1"/>
    </location>
</feature>
<feature type="chain" id="PRO_0000083578" description="Isocitrate dehydrogenase [NADP] cytoplasmic">
    <location>
        <begin position="2"/>
        <end position="414"/>
    </location>
</feature>
<feature type="binding site" evidence="5 11 12">
    <location>
        <begin position="75"/>
        <end position="77"/>
    </location>
    <ligand>
        <name>NADP(+)</name>
        <dbReference type="ChEBI" id="CHEBI:58349"/>
    </ligand>
</feature>
<feature type="binding site" description="in other chain" evidence="5 12">
    <location>
        <position position="77"/>
    </location>
    <ligand>
        <name>substrate</name>
        <note>ligand shared between two neighboring subunits</note>
    </ligand>
</feature>
<feature type="binding site" evidence="5 11 12">
    <location>
        <position position="82"/>
    </location>
    <ligand>
        <name>NADP(+)</name>
        <dbReference type="ChEBI" id="CHEBI:58349"/>
    </ligand>
</feature>
<feature type="binding site" description="in other chain" evidence="5 12">
    <location>
        <begin position="94"/>
        <end position="100"/>
    </location>
    <ligand>
        <name>substrate</name>
        <note>ligand shared between two neighboring subunits</note>
    </ligand>
</feature>
<feature type="binding site" description="in other chain" evidence="5 12">
    <location>
        <position position="109"/>
    </location>
    <ligand>
        <name>substrate</name>
        <note>ligand shared between two neighboring subunits</note>
    </ligand>
</feature>
<feature type="binding site" description="in other chain" evidence="5 12">
    <location>
        <position position="132"/>
    </location>
    <ligand>
        <name>substrate</name>
        <note>ligand shared between two neighboring subunits</note>
    </ligand>
</feature>
<feature type="binding site" evidence="5 12">
    <location>
        <position position="212"/>
    </location>
    <ligand>
        <name>substrate</name>
        <note>ligand shared between two neighboring subunits</note>
    </ligand>
</feature>
<feature type="binding site" evidence="10">
    <location>
        <position position="252"/>
    </location>
    <ligand>
        <name>Mn(2+)</name>
        <dbReference type="ChEBI" id="CHEBI:29035"/>
        <note>ligand shared between two neighboring subunits</note>
    </ligand>
</feature>
<feature type="binding site" evidence="5 11 12">
    <location>
        <position position="260"/>
    </location>
    <ligand>
        <name>NADP(+)</name>
        <dbReference type="ChEBI" id="CHEBI:58349"/>
    </ligand>
</feature>
<feature type="binding site" description="in other chain" evidence="10">
    <location>
        <position position="275"/>
    </location>
    <ligand>
        <name>Mn(2+)</name>
        <dbReference type="ChEBI" id="CHEBI:29035"/>
        <note>ligand shared between two neighboring subunits</note>
    </ligand>
</feature>
<feature type="binding site" description="in other chain" evidence="10">
    <location>
        <position position="279"/>
    </location>
    <ligand>
        <name>Mn(2+)</name>
        <dbReference type="ChEBI" id="CHEBI:29035"/>
        <note>ligand shared between two neighboring subunits</note>
    </ligand>
</feature>
<feature type="binding site" evidence="5 11 12">
    <location>
        <begin position="310"/>
        <end position="315"/>
    </location>
    <ligand>
        <name>NADP(+)</name>
        <dbReference type="ChEBI" id="CHEBI:58349"/>
    </ligand>
</feature>
<feature type="binding site" evidence="5 11 12">
    <location>
        <position position="328"/>
    </location>
    <ligand>
        <name>NADP(+)</name>
        <dbReference type="ChEBI" id="CHEBI:58349"/>
    </ligand>
</feature>
<feature type="site" description="Critical for catalysis" evidence="1">
    <location>
        <position position="139"/>
    </location>
</feature>
<feature type="site" description="Critical for catalysis" evidence="1">
    <location>
        <position position="212"/>
    </location>
</feature>
<feature type="modified residue" description="N-acetylserine" evidence="2">
    <location>
        <position position="2"/>
    </location>
</feature>
<feature type="modified residue" description="Phosphotyrosine" evidence="2">
    <location>
        <position position="42"/>
    </location>
</feature>
<feature type="modified residue" description="N6-acetyllysine" evidence="14">
    <location>
        <position position="81"/>
    </location>
</feature>
<feature type="modified residue" description="N6-succinyllysine" evidence="15">
    <location>
        <position position="126"/>
    </location>
</feature>
<feature type="modified residue" description="N6-acetyllysine" evidence="14">
    <location>
        <position position="224"/>
    </location>
</feature>
<feature type="modified residue" description="N6-acetyllysine" evidence="14">
    <location>
        <position position="233"/>
    </location>
</feature>
<feature type="modified residue" description="N6-acetyllysine" evidence="14">
    <location>
        <position position="243"/>
    </location>
</feature>
<feature type="modified residue" description="N6-acetyllysine" evidence="2">
    <location>
        <position position="321"/>
    </location>
</feature>
<feature type="modified residue" description="Phosphoserine" evidence="13">
    <location>
        <position position="389"/>
    </location>
</feature>
<feature type="modified residue" description="N6-succinyllysine" evidence="15">
    <location>
        <position position="400"/>
    </location>
</feature>
<feature type="mutagenesis site" description="No effect on inhibition by cadmium ions." evidence="5">
    <original>C</original>
    <variation>S</variation>
    <location>
        <position position="245"/>
    </location>
</feature>
<feature type="mutagenesis site" description="Decreased inhibition by cadmium ions." evidence="5">
    <original>C</original>
    <variation>S</variation>
    <location>
        <position position="379"/>
    </location>
</feature>
<feature type="sequence conflict" description="In Ref. 1; AAD02919." evidence="8" ref="1">
    <original>K</original>
    <variation>N</variation>
    <location>
        <position position="243"/>
    </location>
</feature>
<feature type="strand" evidence="16">
    <location>
        <begin position="5"/>
        <end position="14"/>
    </location>
</feature>
<feature type="helix" evidence="16">
    <location>
        <begin position="17"/>
        <end position="30"/>
    </location>
</feature>
<feature type="turn" evidence="16">
    <location>
        <begin position="31"/>
        <end position="34"/>
    </location>
</feature>
<feature type="strand" evidence="16">
    <location>
        <begin position="35"/>
        <end position="43"/>
    </location>
</feature>
<feature type="helix" evidence="16">
    <location>
        <begin position="46"/>
        <end position="51"/>
    </location>
</feature>
<feature type="turn" evidence="16">
    <location>
        <begin position="52"/>
        <end position="54"/>
    </location>
</feature>
<feature type="helix" evidence="16">
    <location>
        <begin position="55"/>
        <end position="67"/>
    </location>
</feature>
<feature type="strand" evidence="16">
    <location>
        <begin position="68"/>
        <end position="72"/>
    </location>
</feature>
<feature type="helix" evidence="16">
    <location>
        <begin position="80"/>
        <end position="86"/>
    </location>
</feature>
<feature type="helix" evidence="16">
    <location>
        <begin position="95"/>
        <end position="103"/>
    </location>
</feature>
<feature type="strand" evidence="16">
    <location>
        <begin position="106"/>
        <end position="111"/>
    </location>
</feature>
<feature type="strand" evidence="16">
    <location>
        <begin position="128"/>
        <end position="133"/>
    </location>
</feature>
<feature type="helix" evidence="16">
    <location>
        <begin position="137"/>
        <end position="140"/>
    </location>
</feature>
<feature type="strand" evidence="16">
    <location>
        <begin position="142"/>
        <end position="146"/>
    </location>
</feature>
<feature type="strand" evidence="16">
    <location>
        <begin position="148"/>
        <end position="158"/>
    </location>
</feature>
<feature type="strand" evidence="16">
    <location>
        <begin position="165"/>
        <end position="172"/>
    </location>
</feature>
<feature type="strand" evidence="16">
    <location>
        <begin position="177"/>
        <end position="185"/>
    </location>
</feature>
<feature type="helix" evidence="16">
    <location>
        <begin position="186"/>
        <end position="203"/>
    </location>
</feature>
<feature type="strand" evidence="16">
    <location>
        <begin position="207"/>
        <end position="211"/>
    </location>
</feature>
<feature type="turn" evidence="16">
    <location>
        <begin position="213"/>
        <end position="215"/>
    </location>
</feature>
<feature type="helix" evidence="16">
    <location>
        <begin position="219"/>
        <end position="234"/>
    </location>
</feature>
<feature type="helix" evidence="16">
    <location>
        <begin position="236"/>
        <end position="241"/>
    </location>
</feature>
<feature type="strand" evidence="16">
    <location>
        <begin position="246"/>
        <end position="250"/>
    </location>
</feature>
<feature type="helix" evidence="16">
    <location>
        <begin position="251"/>
        <end position="260"/>
    </location>
</feature>
<feature type="strand" evidence="16">
    <location>
        <begin position="265"/>
        <end position="269"/>
    </location>
</feature>
<feature type="helix" evidence="16">
    <location>
        <begin position="271"/>
        <end position="285"/>
    </location>
</feature>
<feature type="strand" evidence="16">
    <location>
        <begin position="290"/>
        <end position="296"/>
    </location>
</feature>
<feature type="strand" evidence="16">
    <location>
        <begin position="303"/>
        <end position="306"/>
    </location>
</feature>
<feature type="helix" evidence="16">
    <location>
        <begin position="313"/>
        <end position="320"/>
    </location>
</feature>
<feature type="helix" evidence="16">
    <location>
        <begin position="330"/>
        <end position="347"/>
    </location>
</feature>
<feature type="helix" evidence="16">
    <location>
        <begin position="350"/>
        <end position="368"/>
    </location>
</feature>
<feature type="helix" evidence="16">
    <location>
        <begin position="374"/>
        <end position="381"/>
    </location>
</feature>
<feature type="helix" evidence="16">
    <location>
        <begin position="383"/>
        <end position="385"/>
    </location>
</feature>
<feature type="helix" evidence="16">
    <location>
        <begin position="388"/>
        <end position="390"/>
    </location>
</feature>
<feature type="helix" evidence="16">
    <location>
        <begin position="394"/>
        <end position="413"/>
    </location>
</feature>
<dbReference type="EC" id="1.1.1.42" evidence="4 5"/>
<dbReference type="EMBL" id="AF020039">
    <property type="protein sequence ID" value="AAD02919.1"/>
    <property type="molecule type" value="mRNA"/>
</dbReference>
<dbReference type="EMBL" id="AK149019">
    <property type="protein sequence ID" value="BAE28720.1"/>
    <property type="molecule type" value="mRNA"/>
</dbReference>
<dbReference type="EMBL" id="AK151212">
    <property type="protein sequence ID" value="BAE30207.1"/>
    <property type="molecule type" value="mRNA"/>
</dbReference>
<dbReference type="EMBL" id="AK159173">
    <property type="protein sequence ID" value="BAE34873.1"/>
    <property type="molecule type" value="mRNA"/>
</dbReference>
<dbReference type="EMBL" id="AK160896">
    <property type="protein sequence ID" value="BAE36075.1"/>
    <property type="molecule type" value="mRNA"/>
</dbReference>
<dbReference type="EMBL" id="AK167158">
    <property type="protein sequence ID" value="BAE39299.1"/>
    <property type="molecule type" value="mRNA"/>
</dbReference>
<dbReference type="EMBL" id="CH466548">
    <property type="protein sequence ID" value="EDL00223.1"/>
    <property type="molecule type" value="Genomic_DNA"/>
</dbReference>
<dbReference type="EMBL" id="CH466548">
    <property type="protein sequence ID" value="EDL00225.1"/>
    <property type="molecule type" value="Genomic_DNA"/>
</dbReference>
<dbReference type="CCDS" id="CCDS15016.1"/>
<dbReference type="RefSeq" id="NP_001104790.1">
    <property type="nucleotide sequence ID" value="NM_001111320.1"/>
</dbReference>
<dbReference type="RefSeq" id="NP_034627.3">
    <property type="nucleotide sequence ID" value="NM_010497.3"/>
</dbReference>
<dbReference type="PDB" id="5YZH">
    <property type="method" value="X-ray"/>
    <property type="resolution" value="1.99 A"/>
    <property type="chains" value="A/B=1-414"/>
</dbReference>
<dbReference type="PDB" id="5YZI">
    <property type="method" value="X-ray"/>
    <property type="resolution" value="2.52 A"/>
    <property type="chains" value="A/B=1-414"/>
</dbReference>
<dbReference type="PDB" id="8KIB">
    <property type="method" value="X-ray"/>
    <property type="resolution" value="1.70 A"/>
    <property type="chains" value="A/B/C/D=1-414"/>
</dbReference>
<dbReference type="PDB" id="8W49">
    <property type="method" value="X-ray"/>
    <property type="resolution" value="1.77 A"/>
    <property type="chains" value="A/B/C/D=1-414"/>
</dbReference>
<dbReference type="PDBsum" id="5YZH"/>
<dbReference type="PDBsum" id="5YZI"/>
<dbReference type="PDBsum" id="8KIB"/>
<dbReference type="PDBsum" id="8W49"/>
<dbReference type="SMR" id="O88844"/>
<dbReference type="BioGRID" id="200510">
    <property type="interactions" value="21"/>
</dbReference>
<dbReference type="FunCoup" id="O88844">
    <property type="interactions" value="2750"/>
</dbReference>
<dbReference type="IntAct" id="O88844">
    <property type="interactions" value="3"/>
</dbReference>
<dbReference type="MINT" id="O88844"/>
<dbReference type="STRING" id="10090.ENSMUSP00000095316"/>
<dbReference type="CarbonylDB" id="O88844"/>
<dbReference type="GlyGen" id="O88844">
    <property type="glycosylation" value="2 sites, 1 N-linked glycan (1 site), 1 O-linked glycan (1 site)"/>
</dbReference>
<dbReference type="iPTMnet" id="O88844"/>
<dbReference type="PhosphoSitePlus" id="O88844"/>
<dbReference type="SwissPalm" id="O88844"/>
<dbReference type="REPRODUCTION-2DPAGE" id="O88844"/>
<dbReference type="CPTAC" id="non-CPTAC-3715"/>
<dbReference type="jPOST" id="O88844"/>
<dbReference type="PaxDb" id="10090-ENSMUSP00000095316"/>
<dbReference type="PeptideAtlas" id="O88844"/>
<dbReference type="ProteomicsDB" id="269529"/>
<dbReference type="Pumba" id="O88844"/>
<dbReference type="Antibodypedia" id="34198">
    <property type="antibodies" value="1036 antibodies from 47 providers"/>
</dbReference>
<dbReference type="DNASU" id="15926"/>
<dbReference type="Ensembl" id="ENSMUST00000097709.11">
    <property type="protein sequence ID" value="ENSMUSP00000095316.5"/>
    <property type="gene ID" value="ENSMUSG00000025950.17"/>
</dbReference>
<dbReference type="Ensembl" id="ENSMUST00000169032.8">
    <property type="protein sequence ID" value="ENSMUSP00000127307.2"/>
    <property type="gene ID" value="ENSMUSG00000025950.17"/>
</dbReference>
<dbReference type="GeneID" id="15926"/>
<dbReference type="KEGG" id="mmu:15926"/>
<dbReference type="UCSC" id="uc007bhn.2">
    <property type="organism name" value="mouse"/>
</dbReference>
<dbReference type="AGR" id="MGI:96413"/>
<dbReference type="CTD" id="3417"/>
<dbReference type="MGI" id="MGI:96413">
    <property type="gene designation" value="Idh1"/>
</dbReference>
<dbReference type="VEuPathDB" id="HostDB:ENSMUSG00000025950"/>
<dbReference type="eggNOG" id="KOG1526">
    <property type="taxonomic scope" value="Eukaryota"/>
</dbReference>
<dbReference type="GeneTree" id="ENSGT00390000012547"/>
<dbReference type="HOGENOM" id="CLU_023296_1_1_1"/>
<dbReference type="InParanoid" id="O88844"/>
<dbReference type="OMA" id="HGTVQRH"/>
<dbReference type="OrthoDB" id="248923at2759"/>
<dbReference type="PhylomeDB" id="O88844"/>
<dbReference type="TreeFam" id="TF300428"/>
<dbReference type="BRENDA" id="1.1.1.42">
    <property type="organism ID" value="3474"/>
</dbReference>
<dbReference type="Reactome" id="R-MMU-389542">
    <property type="pathway name" value="NADPH regeneration"/>
</dbReference>
<dbReference type="Reactome" id="R-MMU-6798695">
    <property type="pathway name" value="Neutrophil degranulation"/>
</dbReference>
<dbReference type="Reactome" id="R-MMU-9033241">
    <property type="pathway name" value="Peroxisomal protein import"/>
</dbReference>
<dbReference type="BioGRID-ORCS" id="15926">
    <property type="hits" value="3 hits in 82 CRISPR screens"/>
</dbReference>
<dbReference type="ChiTaRS" id="Idh1">
    <property type="organism name" value="mouse"/>
</dbReference>
<dbReference type="PRO" id="PR:O88844"/>
<dbReference type="Proteomes" id="UP000000589">
    <property type="component" value="Chromosome 1"/>
</dbReference>
<dbReference type="RNAct" id="O88844">
    <property type="molecule type" value="protein"/>
</dbReference>
<dbReference type="Bgee" id="ENSMUSG00000025950">
    <property type="expression patterns" value="Expressed in metanephric proximal tubule and 290 other cell types or tissues"/>
</dbReference>
<dbReference type="ExpressionAtlas" id="O88844">
    <property type="expression patterns" value="baseline and differential"/>
</dbReference>
<dbReference type="GO" id="GO:0005829">
    <property type="term" value="C:cytosol"/>
    <property type="evidence" value="ECO:0000314"/>
    <property type="project" value="MGI"/>
</dbReference>
<dbReference type="GO" id="GO:0005739">
    <property type="term" value="C:mitochondrion"/>
    <property type="evidence" value="ECO:0000314"/>
    <property type="project" value="MGI"/>
</dbReference>
<dbReference type="GO" id="GO:0005782">
    <property type="term" value="C:peroxisomal matrix"/>
    <property type="evidence" value="ECO:0000314"/>
    <property type="project" value="MGI"/>
</dbReference>
<dbReference type="GO" id="GO:0004450">
    <property type="term" value="F:isocitrate dehydrogenase (NADP+) activity"/>
    <property type="evidence" value="ECO:0000314"/>
    <property type="project" value="MGI"/>
</dbReference>
<dbReference type="GO" id="GO:0000287">
    <property type="term" value="F:magnesium ion binding"/>
    <property type="evidence" value="ECO:0000250"/>
    <property type="project" value="UniProtKB"/>
</dbReference>
<dbReference type="GO" id="GO:0051287">
    <property type="term" value="F:NAD binding"/>
    <property type="evidence" value="ECO:0007669"/>
    <property type="project" value="InterPro"/>
</dbReference>
<dbReference type="GO" id="GO:0050661">
    <property type="term" value="F:NADP binding"/>
    <property type="evidence" value="ECO:0007669"/>
    <property type="project" value="Ensembl"/>
</dbReference>
<dbReference type="GO" id="GO:0042803">
    <property type="term" value="F:protein homodimerization activity"/>
    <property type="evidence" value="ECO:0007669"/>
    <property type="project" value="Ensembl"/>
</dbReference>
<dbReference type="GO" id="GO:0006103">
    <property type="term" value="P:2-oxoglutarate metabolic process"/>
    <property type="evidence" value="ECO:0000250"/>
    <property type="project" value="UniProtKB"/>
</dbReference>
<dbReference type="GO" id="GO:0008585">
    <property type="term" value="P:female gonad development"/>
    <property type="evidence" value="ECO:0007669"/>
    <property type="project" value="Ensembl"/>
</dbReference>
<dbReference type="GO" id="GO:0006749">
    <property type="term" value="P:glutathione metabolic process"/>
    <property type="evidence" value="ECO:0000315"/>
    <property type="project" value="MGI"/>
</dbReference>
<dbReference type="GO" id="GO:0006097">
    <property type="term" value="P:glyoxylate cycle"/>
    <property type="evidence" value="ECO:0007669"/>
    <property type="project" value="UniProtKB-KW"/>
</dbReference>
<dbReference type="GO" id="GO:0006102">
    <property type="term" value="P:isocitrate metabolic process"/>
    <property type="evidence" value="ECO:0000250"/>
    <property type="project" value="UniProtKB"/>
</dbReference>
<dbReference type="GO" id="GO:0006740">
    <property type="term" value="P:NADPH regeneration"/>
    <property type="evidence" value="ECO:0000314"/>
    <property type="project" value="MGI"/>
</dbReference>
<dbReference type="GO" id="GO:0071071">
    <property type="term" value="P:regulation of phospholipid biosynthetic process"/>
    <property type="evidence" value="ECO:0000315"/>
    <property type="project" value="MGI"/>
</dbReference>
<dbReference type="GO" id="GO:0060696">
    <property type="term" value="P:regulation of phospholipid catabolic process"/>
    <property type="evidence" value="ECO:0000315"/>
    <property type="project" value="MGI"/>
</dbReference>
<dbReference type="GO" id="GO:0006979">
    <property type="term" value="P:response to oxidative stress"/>
    <property type="evidence" value="ECO:0000314"/>
    <property type="project" value="MGI"/>
</dbReference>
<dbReference type="GO" id="GO:0048545">
    <property type="term" value="P:response to steroid hormone"/>
    <property type="evidence" value="ECO:0007669"/>
    <property type="project" value="Ensembl"/>
</dbReference>
<dbReference type="GO" id="GO:0006099">
    <property type="term" value="P:tricarboxylic acid cycle"/>
    <property type="evidence" value="ECO:0007669"/>
    <property type="project" value="UniProtKB-KW"/>
</dbReference>
<dbReference type="FunFam" id="3.40.718.10:FF:000002">
    <property type="entry name" value="Isocitrate dehydrogenase [NADP]"/>
    <property type="match status" value="1"/>
</dbReference>
<dbReference type="Gene3D" id="3.40.718.10">
    <property type="entry name" value="Isopropylmalate Dehydrogenase"/>
    <property type="match status" value="1"/>
</dbReference>
<dbReference type="InterPro" id="IPR019818">
    <property type="entry name" value="IsoCit/isopropylmalate_DH_CS"/>
</dbReference>
<dbReference type="InterPro" id="IPR004790">
    <property type="entry name" value="Isocitrate_DH_NADP"/>
</dbReference>
<dbReference type="InterPro" id="IPR024084">
    <property type="entry name" value="IsoPropMal-DH-like_dom"/>
</dbReference>
<dbReference type="NCBIfam" id="TIGR00127">
    <property type="entry name" value="nadp_idh_euk"/>
    <property type="match status" value="1"/>
</dbReference>
<dbReference type="NCBIfam" id="NF006156">
    <property type="entry name" value="PRK08299.1"/>
    <property type="match status" value="1"/>
</dbReference>
<dbReference type="PANTHER" id="PTHR11822:SF21">
    <property type="entry name" value="ISOCITRATE DEHYDROGENASE [NADP], MITOCHONDRIAL"/>
    <property type="match status" value="1"/>
</dbReference>
<dbReference type="PANTHER" id="PTHR11822">
    <property type="entry name" value="NADP-SPECIFIC ISOCITRATE DEHYDROGENASE"/>
    <property type="match status" value="1"/>
</dbReference>
<dbReference type="Pfam" id="PF00180">
    <property type="entry name" value="Iso_dh"/>
    <property type="match status" value="1"/>
</dbReference>
<dbReference type="PIRSF" id="PIRSF000108">
    <property type="entry name" value="IDH_NADP"/>
    <property type="match status" value="1"/>
</dbReference>
<dbReference type="SMART" id="SM01329">
    <property type="entry name" value="Iso_dh"/>
    <property type="match status" value="1"/>
</dbReference>
<dbReference type="SUPFAM" id="SSF53659">
    <property type="entry name" value="Isocitrate/Isopropylmalate dehydrogenase-like"/>
    <property type="match status" value="1"/>
</dbReference>
<dbReference type="PROSITE" id="PS00470">
    <property type="entry name" value="IDH_IMDH"/>
    <property type="match status" value="1"/>
</dbReference>
<evidence type="ECO:0000250" key="1"/>
<evidence type="ECO:0000250" key="2">
    <source>
        <dbReference type="UniProtKB" id="O75874"/>
    </source>
</evidence>
<evidence type="ECO:0000250" key="3">
    <source>
        <dbReference type="UniProtKB" id="Q9XSG3"/>
    </source>
</evidence>
<evidence type="ECO:0000269" key="4">
    <source>
    </source>
</evidence>
<evidence type="ECO:0000269" key="5">
    <source>
    </source>
</evidence>
<evidence type="ECO:0000303" key="6">
    <source>
    </source>
</evidence>
<evidence type="ECO:0000303" key="7">
    <source>
    </source>
</evidence>
<evidence type="ECO:0000305" key="8"/>
<evidence type="ECO:0000305" key="9">
    <source>
    </source>
</evidence>
<evidence type="ECO:0000305" key="10">
    <source>
    </source>
</evidence>
<evidence type="ECO:0007744" key="11">
    <source>
        <dbReference type="PDB" id="5YZH"/>
    </source>
</evidence>
<evidence type="ECO:0007744" key="12">
    <source>
        <dbReference type="PDB" id="5YZI"/>
    </source>
</evidence>
<evidence type="ECO:0007744" key="13">
    <source>
    </source>
</evidence>
<evidence type="ECO:0007744" key="14">
    <source>
    </source>
</evidence>
<evidence type="ECO:0007744" key="15">
    <source>
    </source>
</evidence>
<evidence type="ECO:0007829" key="16">
    <source>
        <dbReference type="PDB" id="5YZH"/>
    </source>
</evidence>
<reference key="1">
    <citation type="journal article" date="1998" name="Mol. Biol. Evol.">
        <title>Cytosolic isocitrate dehydrogenase in humans, mice, and voles and phylogenetic analysis of the enzyme family.</title>
        <authorList>
            <person name="Nekrutenko A."/>
            <person name="Hillis D.M."/>
            <person name="Patton J.C."/>
            <person name="Bradley R.D."/>
            <person name="Baker R.J."/>
        </authorList>
    </citation>
    <scope>NUCLEOTIDE SEQUENCE [MRNA]</scope>
</reference>
<reference key="2">
    <citation type="journal article" date="2005" name="Science">
        <title>The transcriptional landscape of the mammalian genome.</title>
        <authorList>
            <person name="Carninci P."/>
            <person name="Kasukawa T."/>
            <person name="Katayama S."/>
            <person name="Gough J."/>
            <person name="Frith M.C."/>
            <person name="Maeda N."/>
            <person name="Oyama R."/>
            <person name="Ravasi T."/>
            <person name="Lenhard B."/>
            <person name="Wells C."/>
            <person name="Kodzius R."/>
            <person name="Shimokawa K."/>
            <person name="Bajic V.B."/>
            <person name="Brenner S.E."/>
            <person name="Batalov S."/>
            <person name="Forrest A.R."/>
            <person name="Zavolan M."/>
            <person name="Davis M.J."/>
            <person name="Wilming L.G."/>
            <person name="Aidinis V."/>
            <person name="Allen J.E."/>
            <person name="Ambesi-Impiombato A."/>
            <person name="Apweiler R."/>
            <person name="Aturaliya R.N."/>
            <person name="Bailey T.L."/>
            <person name="Bansal M."/>
            <person name="Baxter L."/>
            <person name="Beisel K.W."/>
            <person name="Bersano T."/>
            <person name="Bono H."/>
            <person name="Chalk A.M."/>
            <person name="Chiu K.P."/>
            <person name="Choudhary V."/>
            <person name="Christoffels A."/>
            <person name="Clutterbuck D.R."/>
            <person name="Crowe M.L."/>
            <person name="Dalla E."/>
            <person name="Dalrymple B.P."/>
            <person name="de Bono B."/>
            <person name="Della Gatta G."/>
            <person name="di Bernardo D."/>
            <person name="Down T."/>
            <person name="Engstrom P."/>
            <person name="Fagiolini M."/>
            <person name="Faulkner G."/>
            <person name="Fletcher C.F."/>
            <person name="Fukushima T."/>
            <person name="Furuno M."/>
            <person name="Futaki S."/>
            <person name="Gariboldi M."/>
            <person name="Georgii-Hemming P."/>
            <person name="Gingeras T.R."/>
            <person name="Gojobori T."/>
            <person name="Green R.E."/>
            <person name="Gustincich S."/>
            <person name="Harbers M."/>
            <person name="Hayashi Y."/>
            <person name="Hensch T.K."/>
            <person name="Hirokawa N."/>
            <person name="Hill D."/>
            <person name="Huminiecki L."/>
            <person name="Iacono M."/>
            <person name="Ikeo K."/>
            <person name="Iwama A."/>
            <person name="Ishikawa T."/>
            <person name="Jakt M."/>
            <person name="Kanapin A."/>
            <person name="Katoh M."/>
            <person name="Kawasawa Y."/>
            <person name="Kelso J."/>
            <person name="Kitamura H."/>
            <person name="Kitano H."/>
            <person name="Kollias G."/>
            <person name="Krishnan S.P."/>
            <person name="Kruger A."/>
            <person name="Kummerfeld S.K."/>
            <person name="Kurochkin I.V."/>
            <person name="Lareau L.F."/>
            <person name="Lazarevic D."/>
            <person name="Lipovich L."/>
            <person name="Liu J."/>
            <person name="Liuni S."/>
            <person name="McWilliam S."/>
            <person name="Madan Babu M."/>
            <person name="Madera M."/>
            <person name="Marchionni L."/>
            <person name="Matsuda H."/>
            <person name="Matsuzawa S."/>
            <person name="Miki H."/>
            <person name="Mignone F."/>
            <person name="Miyake S."/>
            <person name="Morris K."/>
            <person name="Mottagui-Tabar S."/>
            <person name="Mulder N."/>
            <person name="Nakano N."/>
            <person name="Nakauchi H."/>
            <person name="Ng P."/>
            <person name="Nilsson R."/>
            <person name="Nishiguchi S."/>
            <person name="Nishikawa S."/>
            <person name="Nori F."/>
            <person name="Ohara O."/>
            <person name="Okazaki Y."/>
            <person name="Orlando V."/>
            <person name="Pang K.C."/>
            <person name="Pavan W.J."/>
            <person name="Pavesi G."/>
            <person name="Pesole G."/>
            <person name="Petrovsky N."/>
            <person name="Piazza S."/>
            <person name="Reed J."/>
            <person name="Reid J.F."/>
            <person name="Ring B.Z."/>
            <person name="Ringwald M."/>
            <person name="Rost B."/>
            <person name="Ruan Y."/>
            <person name="Salzberg S.L."/>
            <person name="Sandelin A."/>
            <person name="Schneider C."/>
            <person name="Schoenbach C."/>
            <person name="Sekiguchi K."/>
            <person name="Semple C.A."/>
            <person name="Seno S."/>
            <person name="Sessa L."/>
            <person name="Sheng Y."/>
            <person name="Shibata Y."/>
            <person name="Shimada H."/>
            <person name="Shimada K."/>
            <person name="Silva D."/>
            <person name="Sinclair B."/>
            <person name="Sperling S."/>
            <person name="Stupka E."/>
            <person name="Sugiura K."/>
            <person name="Sultana R."/>
            <person name="Takenaka Y."/>
            <person name="Taki K."/>
            <person name="Tammoja K."/>
            <person name="Tan S.L."/>
            <person name="Tang S."/>
            <person name="Taylor M.S."/>
            <person name="Tegner J."/>
            <person name="Teichmann S.A."/>
            <person name="Ueda H.R."/>
            <person name="van Nimwegen E."/>
            <person name="Verardo R."/>
            <person name="Wei C.L."/>
            <person name="Yagi K."/>
            <person name="Yamanishi H."/>
            <person name="Zabarovsky E."/>
            <person name="Zhu S."/>
            <person name="Zimmer A."/>
            <person name="Hide W."/>
            <person name="Bult C."/>
            <person name="Grimmond S.M."/>
            <person name="Teasdale R.D."/>
            <person name="Liu E.T."/>
            <person name="Brusic V."/>
            <person name="Quackenbush J."/>
            <person name="Wahlestedt C."/>
            <person name="Mattick J.S."/>
            <person name="Hume D.A."/>
            <person name="Kai C."/>
            <person name="Sasaki D."/>
            <person name="Tomaru Y."/>
            <person name="Fukuda S."/>
            <person name="Kanamori-Katayama M."/>
            <person name="Suzuki M."/>
            <person name="Aoki J."/>
            <person name="Arakawa T."/>
            <person name="Iida J."/>
            <person name="Imamura K."/>
            <person name="Itoh M."/>
            <person name="Kato T."/>
            <person name="Kawaji H."/>
            <person name="Kawagashira N."/>
            <person name="Kawashima T."/>
            <person name="Kojima M."/>
            <person name="Kondo S."/>
            <person name="Konno H."/>
            <person name="Nakano K."/>
            <person name="Ninomiya N."/>
            <person name="Nishio T."/>
            <person name="Okada M."/>
            <person name="Plessy C."/>
            <person name="Shibata K."/>
            <person name="Shiraki T."/>
            <person name="Suzuki S."/>
            <person name="Tagami M."/>
            <person name="Waki K."/>
            <person name="Watahiki A."/>
            <person name="Okamura-Oho Y."/>
            <person name="Suzuki H."/>
            <person name="Kawai J."/>
            <person name="Hayashizaki Y."/>
        </authorList>
    </citation>
    <scope>NUCLEOTIDE SEQUENCE [LARGE SCALE MRNA]</scope>
    <source>
        <strain>C57BL/6J</strain>
        <tissue>Bone marrow</tissue>
        <tissue>Embryo</tissue>
        <tissue>Sympathetic ganglion</tissue>
    </source>
</reference>
<reference key="3">
    <citation type="submission" date="2005-07" db="EMBL/GenBank/DDBJ databases">
        <authorList>
            <person name="Mural R.J."/>
            <person name="Adams M.D."/>
            <person name="Myers E.W."/>
            <person name="Smith H.O."/>
            <person name="Venter J.C."/>
        </authorList>
    </citation>
    <scope>NUCLEOTIDE SEQUENCE [LARGE SCALE GENOMIC DNA]</scope>
</reference>
<reference key="4">
    <citation type="submission" date="2007-07" db="UniProtKB">
        <authorList>
            <person name="Lubec G."/>
            <person name="Yang J.W."/>
            <person name="Zigmond M."/>
        </authorList>
    </citation>
    <scope>PROTEIN SEQUENCE OF 30-49</scope>
    <source>
        <tissue>Brain</tissue>
    </source>
</reference>
<reference key="5">
    <citation type="journal article" date="2002" name="Free Radic. Biol. Med.">
        <title>Cytosolic NADP(+)-dependent isocitrate dehydrogenase status modulates oxidative damage to cells.</title>
        <authorList>
            <person name="Lee S.M."/>
            <person name="Koh H.J."/>
            <person name="Park D.C."/>
            <person name="Song B.J."/>
            <person name="Huh T.L."/>
            <person name="Park J.W."/>
        </authorList>
    </citation>
    <scope>FUNCTION</scope>
    <scope>CATALYTIC ACTIVITY</scope>
    <scope>TISSUE SPECIFICITY</scope>
    <scope>SUBCELLULAR LOCATION</scope>
</reference>
<reference key="6">
    <citation type="journal article" date="2010" name="Cell">
        <title>A tissue-specific atlas of mouse protein phosphorylation and expression.</title>
        <authorList>
            <person name="Huttlin E.L."/>
            <person name="Jedrychowski M.P."/>
            <person name="Elias J.E."/>
            <person name="Goswami T."/>
            <person name="Rad R."/>
            <person name="Beausoleil S.A."/>
            <person name="Villen J."/>
            <person name="Haas W."/>
            <person name="Sowa M.E."/>
            <person name="Gygi S.P."/>
        </authorList>
    </citation>
    <scope>PHOSPHORYLATION [LARGE SCALE ANALYSIS] AT SER-389</scope>
    <scope>IDENTIFICATION BY MASS SPECTROMETRY [LARGE SCALE ANALYSIS]</scope>
    <source>
        <tissue>Brain</tissue>
        <tissue>Brown adipose tissue</tissue>
        <tissue>Heart</tissue>
        <tissue>Kidney</tissue>
        <tissue>Liver</tissue>
        <tissue>Lung</tissue>
        <tissue>Pancreas</tissue>
        <tissue>Spleen</tissue>
        <tissue>Testis</tissue>
    </source>
</reference>
<reference key="7">
    <citation type="journal article" date="2013" name="Mol. Cell">
        <title>SIRT5-mediated lysine desuccinylation impacts diverse metabolic pathways.</title>
        <authorList>
            <person name="Park J."/>
            <person name="Chen Y."/>
            <person name="Tishkoff D.X."/>
            <person name="Peng C."/>
            <person name="Tan M."/>
            <person name="Dai L."/>
            <person name="Xie Z."/>
            <person name="Zhang Y."/>
            <person name="Zwaans B.M."/>
            <person name="Skinner M.E."/>
            <person name="Lombard D.B."/>
            <person name="Zhao Y."/>
        </authorList>
    </citation>
    <scope>SUCCINYLATION [LARGE SCALE ANALYSIS] AT LYS-126 AND LYS-400</scope>
    <scope>IDENTIFICATION BY MASS SPECTROMETRY [LARGE SCALE ANALYSIS]</scope>
    <source>
        <tissue>Embryonic fibroblast</tissue>
        <tissue>Liver</tissue>
    </source>
</reference>
<reference key="8">
    <citation type="journal article" date="2013" name="Proc. Natl. Acad. Sci. U.S.A.">
        <title>Label-free quantitative proteomics of the lysine acetylome in mitochondria identifies substrates of SIRT3 in metabolic pathways.</title>
        <authorList>
            <person name="Rardin M.J."/>
            <person name="Newman J.C."/>
            <person name="Held J.M."/>
            <person name="Cusack M.P."/>
            <person name="Sorensen D.J."/>
            <person name="Li B."/>
            <person name="Schilling B."/>
            <person name="Mooney S.D."/>
            <person name="Kahn C.R."/>
            <person name="Verdin E."/>
            <person name="Gibson B.W."/>
        </authorList>
    </citation>
    <scope>ACETYLATION [LARGE SCALE ANALYSIS] AT LYS-81; LYS-224; LYS-233 AND LYS-243</scope>
    <scope>IDENTIFICATION BY MASS SPECTROMETRY [LARGE SCALE ANALYSIS]</scope>
    <source>
        <tissue>Liver</tissue>
    </source>
</reference>
<reference key="9">
    <citation type="journal article" date="2018" name="J. Biol. Inorg. Chem.">
        <title>NADP(+)-dependent cytosolic isocitrate dehydrogenase provides NADPH in the presence of cadmium due to the moderate chelating effect of glutathione.</title>
        <authorList>
            <person name="Cho H.J."/>
            <person name="Cho H.Y."/>
            <person name="Park J.W."/>
            <person name="Kwon O.S."/>
            <person name="Lee H.S."/>
            <person name="Huh T.L."/>
            <person name="Kang B.S."/>
        </authorList>
    </citation>
    <scope>X-RAY CRYSTALLOGRAPHY (1.99 ANGSTROMS) OF 4-413 IN COMPLEX WITH NADP CITRATE AND CADMIUM</scope>
    <scope>COFACTOR</scope>
    <scope>FUNCTION</scope>
    <scope>CATALYTIC ACTIVITY</scope>
    <scope>ACTIVITY REGULATION</scope>
    <scope>SUBUNIT</scope>
    <scope>MUTAGENESIS OF CYS-245 AND CYS-379</scope>
</reference>
<organism>
    <name type="scientific">Mus musculus</name>
    <name type="common">Mouse</name>
    <dbReference type="NCBI Taxonomy" id="10090"/>
    <lineage>
        <taxon>Eukaryota</taxon>
        <taxon>Metazoa</taxon>
        <taxon>Chordata</taxon>
        <taxon>Craniata</taxon>
        <taxon>Vertebrata</taxon>
        <taxon>Euteleostomi</taxon>
        <taxon>Mammalia</taxon>
        <taxon>Eutheria</taxon>
        <taxon>Euarchontoglires</taxon>
        <taxon>Glires</taxon>
        <taxon>Rodentia</taxon>
        <taxon>Myomorpha</taxon>
        <taxon>Muroidea</taxon>
        <taxon>Muridae</taxon>
        <taxon>Murinae</taxon>
        <taxon>Mus</taxon>
        <taxon>Mus</taxon>
    </lineage>
</organism>